<name>OPGB_SALA4</name>
<accession>B5F500</accession>
<keyword id="KW-0997">Cell inner membrane</keyword>
<keyword id="KW-1003">Cell membrane</keyword>
<keyword id="KW-0472">Membrane</keyword>
<keyword id="KW-0808">Transferase</keyword>
<keyword id="KW-0812">Transmembrane</keyword>
<keyword id="KW-1133">Transmembrane helix</keyword>
<organism>
    <name type="scientific">Salmonella agona (strain SL483)</name>
    <dbReference type="NCBI Taxonomy" id="454166"/>
    <lineage>
        <taxon>Bacteria</taxon>
        <taxon>Pseudomonadati</taxon>
        <taxon>Pseudomonadota</taxon>
        <taxon>Gammaproteobacteria</taxon>
        <taxon>Enterobacterales</taxon>
        <taxon>Enterobacteriaceae</taxon>
        <taxon>Salmonella</taxon>
    </lineage>
</organism>
<proteinExistence type="inferred from homology"/>
<feature type="chain" id="PRO_1000136628" description="Phosphoglycerol transferase I">
    <location>
        <begin position="1"/>
        <end position="763"/>
    </location>
</feature>
<feature type="transmembrane region" description="Helical" evidence="1">
    <location>
        <begin position="1"/>
        <end position="21"/>
    </location>
</feature>
<feature type="transmembrane region" description="Helical" evidence="1">
    <location>
        <begin position="26"/>
        <end position="46"/>
    </location>
</feature>
<feature type="transmembrane region" description="Helical" evidence="1">
    <location>
        <begin position="77"/>
        <end position="97"/>
    </location>
</feature>
<feature type="transmembrane region" description="Helical" evidence="1">
    <location>
        <begin position="108"/>
        <end position="128"/>
    </location>
</feature>
<reference key="1">
    <citation type="journal article" date="2011" name="J. Bacteriol.">
        <title>Comparative genomics of 28 Salmonella enterica isolates: evidence for CRISPR-mediated adaptive sublineage evolution.</title>
        <authorList>
            <person name="Fricke W.F."/>
            <person name="Mammel M.K."/>
            <person name="McDermott P.F."/>
            <person name="Tartera C."/>
            <person name="White D.G."/>
            <person name="Leclerc J.E."/>
            <person name="Ravel J."/>
            <person name="Cebula T.A."/>
        </authorList>
    </citation>
    <scope>NUCLEOTIDE SEQUENCE [LARGE SCALE GENOMIC DNA]</scope>
    <source>
        <strain>SL483</strain>
    </source>
</reference>
<dbReference type="EC" id="2.7.8.20" evidence="1"/>
<dbReference type="EMBL" id="CP001138">
    <property type="protein sequence ID" value="ACH51380.1"/>
    <property type="molecule type" value="Genomic_DNA"/>
</dbReference>
<dbReference type="RefSeq" id="WP_001292705.1">
    <property type="nucleotide sequence ID" value="NC_011149.1"/>
</dbReference>
<dbReference type="SMR" id="B5F500"/>
<dbReference type="KEGG" id="sea:SeAg_B4862"/>
<dbReference type="HOGENOM" id="CLU_023986_1_0_6"/>
<dbReference type="UniPathway" id="UPA00637"/>
<dbReference type="Proteomes" id="UP000008819">
    <property type="component" value="Chromosome"/>
</dbReference>
<dbReference type="GO" id="GO:0005886">
    <property type="term" value="C:plasma membrane"/>
    <property type="evidence" value="ECO:0007669"/>
    <property type="project" value="UniProtKB-SubCell"/>
</dbReference>
<dbReference type="GO" id="GO:0008960">
    <property type="term" value="F:phosphatidylglycerol-membrane-oligosaccharide glycerophosphotransferase activity"/>
    <property type="evidence" value="ECO:0007669"/>
    <property type="project" value="UniProtKB-UniRule"/>
</dbReference>
<dbReference type="GO" id="GO:0009250">
    <property type="term" value="P:glucan biosynthetic process"/>
    <property type="evidence" value="ECO:0007669"/>
    <property type="project" value="UniProtKB-UniRule"/>
</dbReference>
<dbReference type="CDD" id="cd16015">
    <property type="entry name" value="LTA_synthase"/>
    <property type="match status" value="1"/>
</dbReference>
<dbReference type="FunFam" id="3.40.720.10:FF:000009">
    <property type="entry name" value="Phosphoglycerol transferase I"/>
    <property type="match status" value="1"/>
</dbReference>
<dbReference type="Gene3D" id="3.40.720.10">
    <property type="entry name" value="Alkaline Phosphatase, subunit A"/>
    <property type="match status" value="1"/>
</dbReference>
<dbReference type="HAMAP" id="MF_01070">
    <property type="entry name" value="MdoB_OpgB"/>
    <property type="match status" value="1"/>
</dbReference>
<dbReference type="InterPro" id="IPR017850">
    <property type="entry name" value="Alkaline_phosphatase_core_sf"/>
</dbReference>
<dbReference type="InterPro" id="IPR054288">
    <property type="entry name" value="DUF7024"/>
</dbReference>
<dbReference type="InterPro" id="IPR020881">
    <property type="entry name" value="OpgB"/>
</dbReference>
<dbReference type="InterPro" id="IPR050448">
    <property type="entry name" value="OpgB/LTA_synthase_biosynth"/>
</dbReference>
<dbReference type="InterPro" id="IPR000917">
    <property type="entry name" value="Sulfatase_N"/>
</dbReference>
<dbReference type="NCBIfam" id="NF003000">
    <property type="entry name" value="PRK03776.1"/>
    <property type="match status" value="1"/>
</dbReference>
<dbReference type="PANTHER" id="PTHR47371">
    <property type="entry name" value="LIPOTEICHOIC ACID SYNTHASE"/>
    <property type="match status" value="1"/>
</dbReference>
<dbReference type="PANTHER" id="PTHR47371:SF3">
    <property type="entry name" value="PHOSPHOGLYCEROL TRANSFERASE I"/>
    <property type="match status" value="1"/>
</dbReference>
<dbReference type="Pfam" id="PF22895">
    <property type="entry name" value="DUF7024"/>
    <property type="match status" value="1"/>
</dbReference>
<dbReference type="Pfam" id="PF00884">
    <property type="entry name" value="Sulfatase"/>
    <property type="match status" value="1"/>
</dbReference>
<dbReference type="SUPFAM" id="SSF53649">
    <property type="entry name" value="Alkaline phosphatase-like"/>
    <property type="match status" value="1"/>
</dbReference>
<protein>
    <recommendedName>
        <fullName evidence="1">Phosphoglycerol transferase I</fullName>
        <ecNumber evidence="1">2.7.8.20</ecNumber>
    </recommendedName>
    <alternativeName>
        <fullName evidence="1">Phosphatidylglycerol--membrane-oligosaccharide glycerophosphotransferase</fullName>
    </alternativeName>
</protein>
<gene>
    <name evidence="1" type="primary">mdoB</name>
    <name evidence="1" type="synonym">opgB</name>
    <name type="ordered locus">SeAg_B4862</name>
</gene>
<comment type="function">
    <text evidence="1">Transfers a phosphoglycerol residue from phosphatidylglycerol to the membrane-bound nascent glucan backbones.</text>
</comment>
<comment type="catalytic activity">
    <reaction evidence="1">
        <text>a phosphatidylglycerol + a membrane-derived-oligosaccharide D-glucose = a 1,2-diacyl-sn-glycerol + a membrane-derived-oligosaccharide 6-(glycerophospho)-D-glucose.</text>
        <dbReference type="EC" id="2.7.8.20"/>
    </reaction>
</comment>
<comment type="pathway">
    <text evidence="1">Glycan metabolism; osmoregulated periplasmic glucan (OPG) biosynthesis.</text>
</comment>
<comment type="subcellular location">
    <subcellularLocation>
        <location evidence="1">Cell inner membrane</location>
        <topology evidence="1">Multi-pass membrane protein</topology>
    </subcellularLocation>
</comment>
<comment type="similarity">
    <text evidence="1">Belongs to the OpgB family.</text>
</comment>
<sequence>MSELLSVALFLASVLIYAWKAGRNTWWFAATLTVLGLFVILNITLYASDYFTGDGINDAVLYTLTNSLTGAGVGKYILPGIGIALALVAVFGALGWILRRRRHHPHHVGYSLLALLLALGSVDASPAFRQITELVKSQMRDGDPDFAVYYKEPAKTIPHPKLNLVYIYGESLERTYFDNDAFPNLTPELGALKNEGLDFSHTMQLPGTDYTIAGMVASQCGIPLFAPFEGNASASVSSFFPQNICLGDILKNSGYQNYFVQGANLRFAGKDVFLKSHGFDHLYGAEELKTVVADPSYRNDWGFYDDTVLDEAWKKFEALSRSGQRFSLFTLTVDTHHPDGFISRTCNRKRYDYDGKPNQSFSAVSCSQENIAEFINKIKASPWFKDTVIVVSSDHLAMNNTAWKYLNKQDRNNLFFILRGDKPQQETLAVKRNTMDNGATVLDILGGDNFIGLGRSSLSGQSLSEVFLNVKEKVLAMKPDIIRLWNFPKEIKDFTVDRDKNMIAFSGSHFRLPLLLRVSDKRVEPLPESEYSAPLRFQLADFAPRDNFVWIDRCYKMAQLWAPALALSTDWCVSQGQLGGQQTVQHVDKAQWQGKTAFKDTMIDMERYKGNVDTLKIVDNDIRYKADSFIFNVAGAPEEVKQFSGISRPESWGRWSNAQLGDEVKIEYKAPLPKKFDLVITAKAFGDNANRPIPVRVGNEEQTLVLGHDVSTITLHFNNPTDANTLVIAPPAPVSTNEGNILGHSPRKLGIGMVEIKVVNVEG</sequence>
<evidence type="ECO:0000255" key="1">
    <source>
        <dbReference type="HAMAP-Rule" id="MF_01070"/>
    </source>
</evidence>